<gene>
    <name evidence="5" type="primary">budC</name>
    <name evidence="8" type="ORF">AB868_02667</name>
    <name evidence="9" type="ORF">C3R40_21815</name>
    <name evidence="11" type="ORF">E4655_16730</name>
    <name evidence="12" type="ORF">FOT62_02910</name>
    <name evidence="10" type="ORF">HMI62_10810</name>
</gene>
<name>MBDH_SERMA</name>
<accession>H9XP47</accession>
<accession>A0A5C7CDG8</accession>
<accession>A0A656VI40</accession>
<sequence>MRFDNKVVVITGAGNGMGEAAARRFSAEGAIVVLADWAKEAVDKVAASLPKGRAMAVHIDVSDHVAVEKMMNEVAEKLGRIDVLLNNAGVHVAGSVLETSIDDWRRIAGVDIDGVVFCSKFALPHLLKTKGCIVNTASVSGLGGDWGAAYYCAAKGAVVNLTRAMALDHGGDGVRINSVCPSLVKTNMTNGWPQEIRDKFNERIALGRAAEPEEVAAVMAFLASDDASFINGANIPVDGGATASDGQPKIV</sequence>
<organism>
    <name type="scientific">Serratia marcescens</name>
    <dbReference type="NCBI Taxonomy" id="615"/>
    <lineage>
        <taxon>Bacteria</taxon>
        <taxon>Pseudomonadati</taxon>
        <taxon>Pseudomonadota</taxon>
        <taxon>Gammaproteobacteria</taxon>
        <taxon>Enterobacterales</taxon>
        <taxon>Yersiniaceae</taxon>
        <taxon>Serratia</taxon>
    </lineage>
</organism>
<protein>
    <recommendedName>
        <fullName evidence="5">Meso-2,3-butanediol dehydrogenase</fullName>
        <shortName evidence="5">BDH</shortName>
        <shortName evidence="5">meso-2,3-BDH</shortName>
        <ecNumber evidence="2">1.1.1.-</ecNumber>
    </recommendedName>
    <alternativeName>
        <fullName evidence="7">(R,S)-butane-2,3-diol dehydrogenase</fullName>
    </alternativeName>
    <alternativeName>
        <fullName evidence="5">NAD(H)-dependent meso-2,3-BDH</fullName>
    </alternativeName>
    <alternativeName>
        <fullName evidence="6">SmBdh</fullName>
    </alternativeName>
</protein>
<feature type="chain" id="PRO_0000458039" description="Meso-2,3-butanediol dehydrogenase">
    <location>
        <begin position="1"/>
        <end position="251"/>
    </location>
</feature>
<feature type="active site" description="Proton acceptor" evidence="1">
    <location>
        <position position="151"/>
    </location>
</feature>
<feature type="binding site" evidence="4 13 14 15">
    <location>
        <position position="15"/>
    </location>
    <ligand>
        <name>NAD(+)</name>
        <dbReference type="ChEBI" id="CHEBI:57540"/>
    </ligand>
</feature>
<feature type="binding site" evidence="4 13 14 15">
    <location>
        <position position="17"/>
    </location>
    <ligand>
        <name>NAD(+)</name>
        <dbReference type="ChEBI" id="CHEBI:57540"/>
    </ligand>
</feature>
<feature type="binding site" evidence="4 13 14 15">
    <location>
        <position position="36"/>
    </location>
    <ligand>
        <name>NAD(+)</name>
        <dbReference type="ChEBI" id="CHEBI:57540"/>
    </ligand>
</feature>
<feature type="binding site" evidence="4 13 14 15">
    <location>
        <position position="60"/>
    </location>
    <ligand>
        <name>NAD(+)</name>
        <dbReference type="ChEBI" id="CHEBI:57540"/>
    </ligand>
</feature>
<feature type="binding site" evidence="4 13 14 15">
    <location>
        <position position="61"/>
    </location>
    <ligand>
        <name>NAD(+)</name>
        <dbReference type="ChEBI" id="CHEBI:57540"/>
    </ligand>
</feature>
<feature type="binding site" evidence="4 13 14 15">
    <location>
        <position position="87"/>
    </location>
    <ligand>
        <name>NAD(+)</name>
        <dbReference type="ChEBI" id="CHEBI:57540"/>
    </ligand>
</feature>
<feature type="binding site" evidence="4 14">
    <location>
        <position position="138"/>
    </location>
    <ligand>
        <name>(R)-acetoin</name>
        <dbReference type="ChEBI" id="CHEBI:15686"/>
    </ligand>
</feature>
<feature type="binding site" evidence="4 14">
    <location>
        <position position="138"/>
    </location>
    <ligand>
        <name>(S)-acetoin</name>
        <dbReference type="ChEBI" id="CHEBI:15687"/>
    </ligand>
</feature>
<feature type="binding site" evidence="4 14">
    <location>
        <position position="140"/>
    </location>
    <ligand>
        <name>(R)-acetoin</name>
        <dbReference type="ChEBI" id="CHEBI:15686"/>
    </ligand>
</feature>
<feature type="binding site" evidence="4 14">
    <location>
        <position position="151"/>
    </location>
    <ligand>
        <name>(R)-acetoin</name>
        <dbReference type="ChEBI" id="CHEBI:15686"/>
    </ligand>
</feature>
<feature type="binding site" evidence="4 14">
    <location>
        <position position="151"/>
    </location>
    <ligand>
        <name>(S)-acetoin</name>
        <dbReference type="ChEBI" id="CHEBI:15687"/>
    </ligand>
</feature>
<feature type="binding site" evidence="4 13 14 15">
    <location>
        <position position="151"/>
    </location>
    <ligand>
        <name>NAD(+)</name>
        <dbReference type="ChEBI" id="CHEBI:57540"/>
    </ligand>
</feature>
<feature type="binding site" evidence="4 13 14 15">
    <location>
        <position position="155"/>
    </location>
    <ligand>
        <name>NAD(+)</name>
        <dbReference type="ChEBI" id="CHEBI:57540"/>
    </ligand>
</feature>
<feature type="binding site" evidence="4 13 14 15">
    <location>
        <position position="184"/>
    </location>
    <ligand>
        <name>NAD(+)</name>
        <dbReference type="ChEBI" id="CHEBI:57540"/>
    </ligand>
</feature>
<feature type="binding site" evidence="4 13 14 15">
    <location>
        <position position="186"/>
    </location>
    <ligand>
        <name>NAD(+)</name>
        <dbReference type="ChEBI" id="CHEBI:57540"/>
    </ligand>
</feature>
<feature type="mutagenesis site" description="Retains 50% of activity with acetoin as substrate; when associated with A-247." evidence="4">
    <original>V</original>
    <variation>Q</variation>
    <location>
        <position position="139"/>
    </location>
</feature>
<feature type="mutagenesis site" description="Mimics longer alpha6 helix. Retains 3% of activity with acetoin as substrate." evidence="4">
    <original>RDK</original>
    <variation>SEAAGKPLGYGTET</variation>
    <location>
        <begin position="197"/>
        <end position="199"/>
    </location>
</feature>
<feature type="mutagenesis site" description="Retains 10% of activity with acetoin as substrate. Retains 50% of activity with acetoin as substrate; when associated with Q-139." evidence="4">
    <original>Q</original>
    <variation>A</variation>
    <location>
        <position position="247"/>
    </location>
</feature>
<feature type="turn" evidence="16">
    <location>
        <begin position="2"/>
        <end position="5"/>
    </location>
</feature>
<feature type="strand" evidence="16">
    <location>
        <begin position="7"/>
        <end position="11"/>
    </location>
</feature>
<feature type="turn" evidence="16">
    <location>
        <begin position="12"/>
        <end position="14"/>
    </location>
</feature>
<feature type="helix" evidence="16">
    <location>
        <begin position="16"/>
        <end position="27"/>
    </location>
</feature>
<feature type="strand" evidence="16">
    <location>
        <begin position="31"/>
        <end position="37"/>
    </location>
</feature>
<feature type="helix" evidence="16">
    <location>
        <begin position="39"/>
        <end position="48"/>
    </location>
</feature>
<feature type="strand" evidence="16">
    <location>
        <begin position="53"/>
        <end position="58"/>
    </location>
</feature>
<feature type="helix" evidence="16">
    <location>
        <begin position="64"/>
        <end position="78"/>
    </location>
</feature>
<feature type="strand" evidence="16">
    <location>
        <begin position="83"/>
        <end position="86"/>
    </location>
</feature>
<feature type="helix" evidence="16">
    <location>
        <begin position="101"/>
        <end position="111"/>
    </location>
</feature>
<feature type="helix" evidence="16">
    <location>
        <begin position="113"/>
        <end position="129"/>
    </location>
</feature>
<feature type="strand" evidence="16">
    <location>
        <begin position="132"/>
        <end position="136"/>
    </location>
</feature>
<feature type="helix" evidence="16">
    <location>
        <begin position="139"/>
        <end position="142"/>
    </location>
</feature>
<feature type="strand" evidence="16">
    <location>
        <begin position="146"/>
        <end position="148"/>
    </location>
</feature>
<feature type="helix" evidence="16">
    <location>
        <begin position="149"/>
        <end position="169"/>
    </location>
</feature>
<feature type="helix" evidence="16">
    <location>
        <begin position="170"/>
        <end position="172"/>
    </location>
</feature>
<feature type="strand" evidence="16">
    <location>
        <begin position="175"/>
        <end position="186"/>
    </location>
</feature>
<feature type="turn" evidence="16">
    <location>
        <begin position="187"/>
        <end position="191"/>
    </location>
</feature>
<feature type="helix" evidence="16">
    <location>
        <begin position="194"/>
        <end position="203"/>
    </location>
</feature>
<feature type="helix" evidence="16">
    <location>
        <begin position="212"/>
        <end position="223"/>
    </location>
</feature>
<feature type="helix" evidence="16">
    <location>
        <begin position="225"/>
        <end position="227"/>
    </location>
</feature>
<feature type="strand" evidence="16">
    <location>
        <begin position="234"/>
        <end position="238"/>
    </location>
</feature>
<feature type="helix" evidence="16">
    <location>
        <begin position="241"/>
        <end position="243"/>
    </location>
</feature>
<evidence type="ECO:0000255" key="1">
    <source>
        <dbReference type="PROSITE-ProRule" id="PRU10001"/>
    </source>
</evidence>
<evidence type="ECO:0000269" key="2">
    <source>
    </source>
</evidence>
<evidence type="ECO:0000269" key="3">
    <source>
    </source>
</evidence>
<evidence type="ECO:0000269" key="4">
    <source>
    </source>
</evidence>
<evidence type="ECO:0000303" key="5">
    <source>
    </source>
</evidence>
<evidence type="ECO:0000303" key="6">
    <source>
    </source>
</evidence>
<evidence type="ECO:0000305" key="7"/>
<evidence type="ECO:0000312" key="8">
    <source>
        <dbReference type="EMBL" id="KMU51916.1"/>
    </source>
</evidence>
<evidence type="ECO:0000312" key="9">
    <source>
        <dbReference type="EMBL" id="POP15128.1"/>
    </source>
</evidence>
<evidence type="ECO:0000312" key="10">
    <source>
        <dbReference type="EMBL" id="QJU39777.1"/>
    </source>
</evidence>
<evidence type="ECO:0000312" key="11">
    <source>
        <dbReference type="EMBL" id="TFZ84885.1"/>
    </source>
</evidence>
<evidence type="ECO:0000312" key="12">
    <source>
        <dbReference type="EMBL" id="TXE35950.1"/>
    </source>
</evidence>
<evidence type="ECO:0007744" key="13">
    <source>
        <dbReference type="PDB" id="6VSP"/>
    </source>
</evidence>
<evidence type="ECO:0007744" key="14">
    <source>
        <dbReference type="PDB" id="6XEW"/>
    </source>
</evidence>
<evidence type="ECO:0007744" key="15">
    <source>
        <dbReference type="PDB" id="6XEX"/>
    </source>
</evidence>
<evidence type="ECO:0007829" key="16">
    <source>
        <dbReference type="PDB" id="6XEX"/>
    </source>
</evidence>
<comment type="function">
    <text evidence="2">Catalyzes the NAD-dependent oxidation of meso-2,3-butanediol to (3R)-acetoin, and of (2S,3S)-2,3-butanediol to (3S)-acetoin, with much lower efficiency (PubMed:23666479). Can also oxidize several primary alcohols such as glycerol, 1-2-pentanediol and 1,2-propanediol, with lower activity (PubMed:23666479). Cannot use (2R,3R)-2,3-butanediol (PubMed:23666479). In the presence of NADH, catalyzes the reduction of (3R)-acetoin to meso-2,3-butanediol, of (3S)-acetoin to (2S,3S)-2,3-butanediol and of diacetyl to (3S)-acetoin (PubMed:23666479). No activity is detected with NADPH/NADP(+) (PubMed:23666479).</text>
</comment>
<comment type="catalytic activity">
    <reaction evidence="2">
        <text>(R,S)-butane-2,3-diol + NAD(+) = (R)-acetoin + NADH + H(+)</text>
        <dbReference type="Rhea" id="RHEA:75423"/>
        <dbReference type="ChEBI" id="CHEBI:15378"/>
        <dbReference type="ChEBI" id="CHEBI:15686"/>
        <dbReference type="ChEBI" id="CHEBI:57540"/>
        <dbReference type="ChEBI" id="CHEBI:57945"/>
        <dbReference type="ChEBI" id="CHEBI:75460"/>
    </reaction>
</comment>
<comment type="catalytic activity">
    <reaction evidence="2">
        <text>(S,S)-butane-2,3-diol + NAD(+) = (S)-acetoin + NADH + H(+)</text>
        <dbReference type="Rhea" id="RHEA:12184"/>
        <dbReference type="ChEBI" id="CHEBI:15378"/>
        <dbReference type="ChEBI" id="CHEBI:15687"/>
        <dbReference type="ChEBI" id="CHEBI:16812"/>
        <dbReference type="ChEBI" id="CHEBI:57540"/>
        <dbReference type="ChEBI" id="CHEBI:57945"/>
    </reaction>
</comment>
<comment type="catalytic activity">
    <reaction evidence="2">
        <text>(S)-acetoin + NAD(+) = diacetyl + NADH + H(+)</text>
        <dbReference type="Rhea" id="RHEA:27286"/>
        <dbReference type="ChEBI" id="CHEBI:15378"/>
        <dbReference type="ChEBI" id="CHEBI:15687"/>
        <dbReference type="ChEBI" id="CHEBI:16583"/>
        <dbReference type="ChEBI" id="CHEBI:57540"/>
        <dbReference type="ChEBI" id="CHEBI:57945"/>
    </reaction>
</comment>
<comment type="activity regulation">
    <text evidence="2">Oxidation of meso-2,3-butanediol is enhanced in the presence of Fe(2+) (PubMed:23666479). Reduction of diacetyl and (3S/3R)-acetoin is slightly enhanced in the presence of Mg(2+) and Mn(2+) (PubMed:23666479). Activity is inhibited by several metal ions, particularly Fe(3+) for reduction of diacetyl and acetoin (PubMed:23666479).</text>
</comment>
<comment type="biophysicochemical properties">
    <kinetics>
        <KM evidence="2">4.1 mM for meso-2,3-butanediol</KM>
        <KM evidence="2">31.2 mM for (2S,3S)-2,3-butanediol</KM>
        <KM evidence="2">0.97 mM for (3S/3R)-acetoin</KM>
        <KM evidence="2">3.3 mM for diacetyl</KM>
        <text evidence="2">kcat is 6.2 sec(-1) with meso-2,3-butanediol as substrate. kcat is 1.02 sec(-1) with (2S,3S)-2,3-butanediol as substrate. kcat is 19.7 sec(-1) with (3S/3R)-acetoin as substrate. kcat is 11.5 sec(-1) with diacetyl as substrate.</text>
    </kinetics>
    <phDependence>
        <text evidence="2">Optimum pH is 8.0 for meso-2,3-butanediol oxidation (PubMed:23666479). Optimum pH is 5.0 for (3S/3R)-acetoin reduction and 8.0 for diacetyl reduction (PubMed:23666479).</text>
    </phDependence>
    <temperatureDependence>
        <text evidence="2">Optimum temperature is 40 degrees Celsius for oxidation and reduction reactions.</text>
    </temperatureDependence>
</comment>
<comment type="subunit">
    <text evidence="4">Homotetramer; dimer of dimers.</text>
</comment>
<comment type="domain">
    <text evidence="4">The substrate-binding pocket is formed by two protein molecules (PubMed:33292448). When compared to other Bdh enzymes, SmBdh contains a shorter alpha6 helix, which provides more efficient entry and exit of molecules from the active site, thereby contributing to enhanced substrate turnover (PubMed:33292448).</text>
</comment>
<comment type="disruption phenotype">
    <text evidence="3">Knockout of the gene causes the accumulation of the intermediate product acetoin inside the bacterial cells.</text>
</comment>
<comment type="biotechnology">
    <text evidence="4">Could be used to improve the production of 2,3-butanediol, a valuable chemical for industrial applications, in Z.mobilis cells.</text>
</comment>
<comment type="similarity">
    <text evidence="7">Belongs to the short-chain dehydrogenases/reductases (SDR) family.</text>
</comment>
<keyword id="KW-0002">3D-structure</keyword>
<keyword id="KW-0520">NAD</keyword>
<keyword id="KW-0560">Oxidoreductase</keyword>
<dbReference type="EC" id="1.1.1.-" evidence="2"/>
<dbReference type="EMBL" id="JQ639075">
    <property type="protein sequence ID" value="AFH00999.1"/>
    <property type="molecule type" value="Genomic_DNA"/>
</dbReference>
<dbReference type="EMBL" id="KF547938">
    <property type="protein sequence ID" value="AHA90850.1"/>
    <property type="molecule type" value="Genomic_DNA"/>
</dbReference>
<dbReference type="EMBL" id="LFJS01000012">
    <property type="protein sequence ID" value="KMU51916.1"/>
    <property type="molecule type" value="Genomic_DNA"/>
</dbReference>
<dbReference type="EMBL" id="PQGI01000014">
    <property type="protein sequence ID" value="POP15128.1"/>
    <property type="molecule type" value="Genomic_DNA"/>
</dbReference>
<dbReference type="EMBL" id="SRIG01000147">
    <property type="protein sequence ID" value="TFZ84885.1"/>
    <property type="molecule type" value="Genomic_DNA"/>
</dbReference>
<dbReference type="EMBL" id="VOUQ01000002">
    <property type="protein sequence ID" value="TXE35950.1"/>
    <property type="molecule type" value="Genomic_DNA"/>
</dbReference>
<dbReference type="EMBL" id="CP053286">
    <property type="protein sequence ID" value="QJU39777.1"/>
    <property type="molecule type" value="Genomic_DNA"/>
</dbReference>
<dbReference type="RefSeq" id="WP_016928044.1">
    <property type="nucleotide sequence ID" value="NZ_WVHX01000002.1"/>
</dbReference>
<dbReference type="PDB" id="6VSP">
    <property type="method" value="X-ray"/>
    <property type="resolution" value="1.90 A"/>
    <property type="chains" value="A/B=2-251"/>
</dbReference>
<dbReference type="PDB" id="6XEW">
    <property type="method" value="X-ray"/>
    <property type="resolution" value="2.00 A"/>
    <property type="chains" value="A/B=2-251"/>
</dbReference>
<dbReference type="PDB" id="6XEX">
    <property type="method" value="X-ray"/>
    <property type="resolution" value="1.80 A"/>
    <property type="chains" value="A/B=2-251"/>
</dbReference>
<dbReference type="PDBsum" id="6VSP"/>
<dbReference type="PDBsum" id="6XEW"/>
<dbReference type="PDBsum" id="6XEX"/>
<dbReference type="SMR" id="H9XP47"/>
<dbReference type="PATRIC" id="fig|615.103.peg.4839"/>
<dbReference type="BioCyc" id="MetaCyc:MONOMER-18270"/>
<dbReference type="BRENDA" id="1.1.1.B20">
    <property type="organism ID" value="5690"/>
</dbReference>
<dbReference type="Proteomes" id="UP000037482">
    <property type="component" value="Unassembled WGS sequence"/>
</dbReference>
<dbReference type="Proteomes" id="UP000321126">
    <property type="component" value="Unassembled WGS sequence"/>
</dbReference>
<dbReference type="GO" id="GO:0016491">
    <property type="term" value="F:oxidoreductase activity"/>
    <property type="evidence" value="ECO:0007669"/>
    <property type="project" value="UniProtKB-KW"/>
</dbReference>
<dbReference type="CDD" id="cd05233">
    <property type="entry name" value="SDR_c"/>
    <property type="match status" value="1"/>
</dbReference>
<dbReference type="FunFam" id="3.40.50.720:FF:000084">
    <property type="entry name" value="Short-chain dehydrogenase reductase"/>
    <property type="match status" value="1"/>
</dbReference>
<dbReference type="Gene3D" id="3.40.50.720">
    <property type="entry name" value="NAD(P)-binding Rossmann-like Domain"/>
    <property type="match status" value="1"/>
</dbReference>
<dbReference type="InterPro" id="IPR036291">
    <property type="entry name" value="NAD(P)-bd_dom_sf"/>
</dbReference>
<dbReference type="InterPro" id="IPR020904">
    <property type="entry name" value="Sc_DH/Rdtase_CS"/>
</dbReference>
<dbReference type="InterPro" id="IPR002347">
    <property type="entry name" value="SDR_fam"/>
</dbReference>
<dbReference type="NCBIfam" id="NF005559">
    <property type="entry name" value="PRK07231.1"/>
    <property type="match status" value="1"/>
</dbReference>
<dbReference type="PANTHER" id="PTHR43975:SF2">
    <property type="entry name" value="EG:BACR7A4.14 PROTEIN-RELATED"/>
    <property type="match status" value="1"/>
</dbReference>
<dbReference type="PANTHER" id="PTHR43975">
    <property type="entry name" value="ZGC:101858"/>
    <property type="match status" value="1"/>
</dbReference>
<dbReference type="Pfam" id="PF13561">
    <property type="entry name" value="adh_short_C2"/>
    <property type="match status" value="1"/>
</dbReference>
<dbReference type="PRINTS" id="PR00081">
    <property type="entry name" value="GDHRDH"/>
</dbReference>
<dbReference type="PRINTS" id="PR00080">
    <property type="entry name" value="SDRFAMILY"/>
</dbReference>
<dbReference type="SUPFAM" id="SSF51735">
    <property type="entry name" value="NAD(P)-binding Rossmann-fold domains"/>
    <property type="match status" value="1"/>
</dbReference>
<dbReference type="PROSITE" id="PS00061">
    <property type="entry name" value="ADH_SHORT"/>
    <property type="match status" value="1"/>
</dbReference>
<proteinExistence type="evidence at protein level"/>
<reference key="1">
    <citation type="journal article" date="2014" name="Appl. Microbiol. Biotechnol.">
        <title>A new NAD(H)-dependent meso-2,3-butanediol dehydrogenase from an industrially potential strain Serratia marcescens H30.</title>
        <authorList>
            <person name="Zhang L."/>
            <person name="Xu Q."/>
            <person name="Zhan S."/>
            <person name="Li Y."/>
            <person name="Lin H."/>
            <person name="Sun S."/>
            <person name="Sha L."/>
            <person name="Hu K."/>
            <person name="Guan X."/>
            <person name="Shen Y."/>
        </authorList>
    </citation>
    <scope>NUCLEOTIDE SEQUENCE [GENOMIC DNA]</scope>
    <scope>FUNCTION</scope>
    <scope>CATALYTIC ACTIVITY</scope>
    <scope>SUBSTRATE SPECIFICITY</scope>
    <scope>ACTIVITY REGULATION</scope>
    <scope>BIOPHYSICOCHEMICAL PROPERTIES</scope>
    <source>
        <strain>H30</strain>
    </source>
</reference>
<reference key="2">
    <citation type="journal article" date="2014" name="J. Ind. Microbiol. Biotechnol.">
        <title>Characterization of acetoin production in a budC gene disrupted mutant of Serratia marcescens G12.</title>
        <authorList>
            <person name="Gao S."/>
            <person name="Guo W."/>
            <person name="Shi L."/>
            <person name="Yu Y."/>
            <person name="Zhang C."/>
            <person name="Yang H."/>
        </authorList>
    </citation>
    <scope>NUCLEOTIDE SEQUENCE [GENOMIC DNA]</scope>
    <scope>DISRUPTION PHENOTYPE</scope>
    <source>
        <strain>G12</strain>
    </source>
</reference>
<reference evidence="8" key="3">
    <citation type="submission" date="2015-06" db="EMBL/GenBank/DDBJ databases">
        <title>Draft Genome of Serratia marcescens Strain AH0650_Sm1.</title>
        <authorList>
            <person name="Wan Y."/>
            <person name="Gorrie C."/>
            <person name="Holt K."/>
        </authorList>
    </citation>
    <scope>NUCLEOTIDE SEQUENCE [LARGE SCALE GENOMIC DNA]</scope>
    <source>
        <strain>AH0650_Sm1</strain>
    </source>
</reference>
<reference evidence="9" key="4">
    <citation type="submission" date="2018-01" db="EMBL/GenBank/DDBJ databases">
        <title>The opportunistic pathogen Serratia marcescens is an overlooked threat to honeybees.</title>
        <authorList>
            <person name="Raymann K."/>
            <person name="Shaffer Z."/>
            <person name="Coon K."/>
            <person name="Salisbury S."/>
            <person name="Moran N.A."/>
        </authorList>
    </citation>
    <scope>NUCLEOTIDE SEQUENCE [LARGE SCALE GENOMIC DNA]</scope>
    <source>
        <strain>KZ19</strain>
    </source>
</reference>
<reference evidence="11" key="5">
    <citation type="submission" date="2019-04" db="EMBL/GenBank/DDBJ databases">
        <title>Serratia marcescens subsp. sakuensis DSM 17174 type strain.</title>
        <authorList>
            <person name="Doijad S."/>
            <person name="Chakraborty T."/>
        </authorList>
    </citation>
    <scope>NUCLEOTIDE SEQUENCE [LARGE SCALE GENOMIC DNA]</scope>
    <source>
        <strain>DSM 17174</strain>
    </source>
</reference>
<reference evidence="12" key="6">
    <citation type="submission" date="2019-07" db="EMBL/GenBank/DDBJ databases">
        <title>Serratia strains were isolated from fresh produce.</title>
        <authorList>
            <person name="Cho G.-S."/>
            <person name="Stein M."/>
            <person name="Lee W."/>
            <person name="Suh S.H."/>
            <person name="Franz C.M.A.P."/>
        </authorList>
    </citation>
    <scope>NUCLEOTIDE SEQUENCE [LARGE SCALE GENOMIC DNA]</scope>
    <source>
        <strain>S16</strain>
    </source>
</reference>
<reference evidence="10" key="7">
    <citation type="submission" date="2020-05" db="EMBL/GenBank/DDBJ databases">
        <title>Identification of essential genes associated with prodigiosin productionn of Serratia marcescens FZSF02.</title>
        <authorList>
            <person name="Jia X."/>
            <person name="Chen J."/>
        </authorList>
    </citation>
    <scope>NUCLEOTIDE SEQUENCE [LARGE SCALE GENOMIC DNA]</scope>
    <source>
        <strain>FZSF02</strain>
    </source>
</reference>
<reference evidence="13 14 15" key="8">
    <citation type="journal article" date="2020" name="Biotechnol. Biofuels">
        <title>Phylogenetics-based identification and characterization of a superior 2,3-butanediol dehydrogenase for Zymomonas mobilis expression.</title>
        <authorList>
            <person name="Subramanian V."/>
            <person name="Lunin V.V."/>
            <person name="Farmer S.J."/>
            <person name="Alahuhta M."/>
            <person name="Moore K.T."/>
            <person name="Ho A."/>
            <person name="Chaudhari Y.B."/>
            <person name="Zhang M."/>
            <person name="Himmel M.E."/>
            <person name="Decker S.R."/>
        </authorList>
    </citation>
    <scope>X-RAY CRYSTALLOGRAPHY (1.80 ANGSTROMS) OF 2-251 OF WILD-TYPE IN COMPLEX WITH NAD; (R)-ACETOIN AND (S)-ACETOIN AND OF MUTANTS ALA-247 AND GLN-139/ALA-247 IN COMPLEXES WITH NAD</scope>
    <scope>SUBUNIT</scope>
    <scope>DOMAIN</scope>
    <scope>BIOTECHNOLOGY</scope>
    <scope>MUTAGENESIS OF VAL-139; 197-ARG--LYS-199 AND GLN-247</scope>
</reference>